<organism>
    <name type="scientific">Ruegeria pomeroyi (strain ATCC 700808 / DSM 15171 / DSS-3)</name>
    <name type="common">Silicibacter pomeroyi</name>
    <dbReference type="NCBI Taxonomy" id="246200"/>
    <lineage>
        <taxon>Bacteria</taxon>
        <taxon>Pseudomonadati</taxon>
        <taxon>Pseudomonadota</taxon>
        <taxon>Alphaproteobacteria</taxon>
        <taxon>Rhodobacterales</taxon>
        <taxon>Roseobacteraceae</taxon>
        <taxon>Ruegeria</taxon>
    </lineage>
</organism>
<name>Y3421_RUEPO</name>
<sequence length="62" mass="6742">MSETPAAFDRRMLEALVCPVTHATLEYDAGAQELVSKGAKLAFPIRNGIPVMLVDEARPLDD</sequence>
<keyword id="KW-1185">Reference proteome</keyword>
<feature type="chain" id="PRO_0000291175" description="UPF0434 protein SPO3421">
    <location>
        <begin position="1"/>
        <end position="62"/>
    </location>
</feature>
<accession>Q5LMZ1</accession>
<proteinExistence type="inferred from homology"/>
<reference key="1">
    <citation type="journal article" date="2004" name="Nature">
        <title>Genome sequence of Silicibacter pomeroyi reveals adaptations to the marine environment.</title>
        <authorList>
            <person name="Moran M.A."/>
            <person name="Buchan A."/>
            <person name="Gonzalez J.M."/>
            <person name="Heidelberg J.F."/>
            <person name="Whitman W.B."/>
            <person name="Kiene R.P."/>
            <person name="Henriksen J.R."/>
            <person name="King G.M."/>
            <person name="Belas R."/>
            <person name="Fuqua C."/>
            <person name="Brinkac L.M."/>
            <person name="Lewis M."/>
            <person name="Johri S."/>
            <person name="Weaver B."/>
            <person name="Pai G."/>
            <person name="Eisen J.A."/>
            <person name="Rahe E."/>
            <person name="Sheldon W.M."/>
            <person name="Ye W."/>
            <person name="Miller T.R."/>
            <person name="Carlton J."/>
            <person name="Rasko D.A."/>
            <person name="Paulsen I.T."/>
            <person name="Ren Q."/>
            <person name="Daugherty S.C."/>
            <person name="DeBoy R.T."/>
            <person name="Dodson R.J."/>
            <person name="Durkin A.S."/>
            <person name="Madupu R."/>
            <person name="Nelson W.C."/>
            <person name="Sullivan S.A."/>
            <person name="Rosovitz M.J."/>
            <person name="Haft D.H."/>
            <person name="Selengut J."/>
            <person name="Ward N."/>
        </authorList>
    </citation>
    <scope>NUCLEOTIDE SEQUENCE [LARGE SCALE GENOMIC DNA]</scope>
    <source>
        <strain>ATCC 700808 / DSM 15171 / DSS-3</strain>
    </source>
</reference>
<reference key="2">
    <citation type="journal article" date="2014" name="Stand. Genomic Sci.">
        <title>An updated genome annotation for the model marine bacterium Ruegeria pomeroyi DSS-3.</title>
        <authorList>
            <person name="Rivers A.R."/>
            <person name="Smith C.B."/>
            <person name="Moran M.A."/>
        </authorList>
    </citation>
    <scope>GENOME REANNOTATION</scope>
    <source>
        <strain>ATCC 700808 / DSM 15171 / DSS-3</strain>
    </source>
</reference>
<comment type="similarity">
    <text evidence="1">Belongs to the UPF0434 family.</text>
</comment>
<protein>
    <recommendedName>
        <fullName evidence="1">UPF0434 protein SPO3421</fullName>
    </recommendedName>
</protein>
<gene>
    <name type="ordered locus">SPO3421</name>
</gene>
<evidence type="ECO:0000255" key="1">
    <source>
        <dbReference type="HAMAP-Rule" id="MF_01187"/>
    </source>
</evidence>
<dbReference type="EMBL" id="CP000031">
    <property type="protein sequence ID" value="AAV96647.1"/>
    <property type="molecule type" value="Genomic_DNA"/>
</dbReference>
<dbReference type="RefSeq" id="WP_011049104.1">
    <property type="nucleotide sequence ID" value="NC_003911.12"/>
</dbReference>
<dbReference type="SMR" id="Q5LMZ1"/>
<dbReference type="STRING" id="246200.SPO3421"/>
<dbReference type="PaxDb" id="246200-SPO3421"/>
<dbReference type="DNASU" id="3195132"/>
<dbReference type="KEGG" id="sil:SPO3421"/>
<dbReference type="eggNOG" id="COG2835">
    <property type="taxonomic scope" value="Bacteria"/>
</dbReference>
<dbReference type="HOGENOM" id="CLU_155659_2_2_5"/>
<dbReference type="OrthoDB" id="9812205at2"/>
<dbReference type="Proteomes" id="UP000001023">
    <property type="component" value="Chromosome"/>
</dbReference>
<dbReference type="GO" id="GO:0005829">
    <property type="term" value="C:cytosol"/>
    <property type="evidence" value="ECO:0007669"/>
    <property type="project" value="TreeGrafter"/>
</dbReference>
<dbReference type="FunFam" id="2.20.25.10:FF:000002">
    <property type="entry name" value="UPF0434 protein YcaR"/>
    <property type="match status" value="1"/>
</dbReference>
<dbReference type="Gene3D" id="2.20.25.10">
    <property type="match status" value="1"/>
</dbReference>
<dbReference type="HAMAP" id="MF_01187">
    <property type="entry name" value="UPF0434"/>
    <property type="match status" value="1"/>
</dbReference>
<dbReference type="InterPro" id="IPR005651">
    <property type="entry name" value="Trm112-like"/>
</dbReference>
<dbReference type="PANTHER" id="PTHR33505:SF4">
    <property type="entry name" value="PROTEIN PREY, MITOCHONDRIAL"/>
    <property type="match status" value="1"/>
</dbReference>
<dbReference type="PANTHER" id="PTHR33505">
    <property type="entry name" value="ZGC:162634"/>
    <property type="match status" value="1"/>
</dbReference>
<dbReference type="Pfam" id="PF03966">
    <property type="entry name" value="Trm112p"/>
    <property type="match status" value="1"/>
</dbReference>
<dbReference type="SUPFAM" id="SSF158997">
    <property type="entry name" value="Trm112p-like"/>
    <property type="match status" value="1"/>
</dbReference>